<organism>
    <name type="scientific">Ligilactobacillus salivarius (strain UCC118)</name>
    <name type="common">Lactobacillus salivarius</name>
    <dbReference type="NCBI Taxonomy" id="362948"/>
    <lineage>
        <taxon>Bacteria</taxon>
        <taxon>Bacillati</taxon>
        <taxon>Bacillota</taxon>
        <taxon>Bacilli</taxon>
        <taxon>Lactobacillales</taxon>
        <taxon>Lactobacillaceae</taxon>
        <taxon>Ligilactobacillus</taxon>
    </lineage>
</organism>
<reference key="1">
    <citation type="journal article" date="2006" name="Proc. Natl. Acad. Sci. U.S.A.">
        <title>Multireplicon genome architecture of Lactobacillus salivarius.</title>
        <authorList>
            <person name="Claesson M.J."/>
            <person name="Li Y."/>
            <person name="Leahy S."/>
            <person name="Canchaya C."/>
            <person name="van Pijkeren J.P."/>
            <person name="Cerdeno-Tarraga A.M."/>
            <person name="Parkhill J."/>
            <person name="Flynn S."/>
            <person name="O'Sullivan G.C."/>
            <person name="Collins J.K."/>
            <person name="Higgins D."/>
            <person name="Shanahan F."/>
            <person name="Fitzgerald G.F."/>
            <person name="van Sinderen D."/>
            <person name="O'Toole P.W."/>
        </authorList>
    </citation>
    <scope>NUCLEOTIDE SEQUENCE [LARGE SCALE GENOMIC DNA]</scope>
    <source>
        <strain>UCC118</strain>
    </source>
</reference>
<evidence type="ECO:0000255" key="1">
    <source>
        <dbReference type="HAMAP-Rule" id="MF_01364"/>
    </source>
</evidence>
<evidence type="ECO:0000305" key="2"/>
<protein>
    <recommendedName>
        <fullName evidence="1">Small ribosomal subunit protein uS14B</fullName>
    </recommendedName>
    <alternativeName>
        <fullName evidence="2">30S ribosomal protein S14 type Z</fullName>
    </alternativeName>
</protein>
<comment type="function">
    <text evidence="1">Binds 16S rRNA, required for the assembly of 30S particles and may also be responsible for determining the conformation of the 16S rRNA at the A site.</text>
</comment>
<comment type="cofactor">
    <cofactor evidence="1">
        <name>Zn(2+)</name>
        <dbReference type="ChEBI" id="CHEBI:29105"/>
    </cofactor>
    <text evidence="1">Binds 1 zinc ion per subunit.</text>
</comment>
<comment type="subunit">
    <text evidence="1">Part of the 30S ribosomal subunit. Contacts proteins S3 and S10.</text>
</comment>
<comment type="similarity">
    <text evidence="1">Belongs to the universal ribosomal protein uS14 family. Zinc-binding uS14 subfamily.</text>
</comment>
<keyword id="KW-0479">Metal-binding</keyword>
<keyword id="KW-1185">Reference proteome</keyword>
<keyword id="KW-0687">Ribonucleoprotein</keyword>
<keyword id="KW-0689">Ribosomal protein</keyword>
<keyword id="KW-0694">RNA-binding</keyword>
<keyword id="KW-0699">rRNA-binding</keyword>
<keyword id="KW-0862">Zinc</keyword>
<dbReference type="EMBL" id="CP000233">
    <property type="protein sequence ID" value="ABE00226.1"/>
    <property type="molecule type" value="Genomic_DNA"/>
</dbReference>
<dbReference type="RefSeq" id="WP_003701320.1">
    <property type="nucleotide sequence ID" value="NC_007929.1"/>
</dbReference>
<dbReference type="RefSeq" id="YP_536309.1">
    <property type="nucleotide sequence ID" value="NC_007929.1"/>
</dbReference>
<dbReference type="SMR" id="Q1WSA3"/>
<dbReference type="STRING" id="362948.LSL_1422"/>
<dbReference type="KEGG" id="lsl:LSL_1422"/>
<dbReference type="PATRIC" id="fig|362948.14.peg.1505"/>
<dbReference type="HOGENOM" id="CLU_139869_3_0_9"/>
<dbReference type="OrthoDB" id="9810484at2"/>
<dbReference type="Proteomes" id="UP000006559">
    <property type="component" value="Chromosome"/>
</dbReference>
<dbReference type="GO" id="GO:0015935">
    <property type="term" value="C:small ribosomal subunit"/>
    <property type="evidence" value="ECO:0007669"/>
    <property type="project" value="TreeGrafter"/>
</dbReference>
<dbReference type="GO" id="GO:0019843">
    <property type="term" value="F:rRNA binding"/>
    <property type="evidence" value="ECO:0007669"/>
    <property type="project" value="UniProtKB-UniRule"/>
</dbReference>
<dbReference type="GO" id="GO:0003735">
    <property type="term" value="F:structural constituent of ribosome"/>
    <property type="evidence" value="ECO:0007669"/>
    <property type="project" value="InterPro"/>
</dbReference>
<dbReference type="GO" id="GO:0008270">
    <property type="term" value="F:zinc ion binding"/>
    <property type="evidence" value="ECO:0007669"/>
    <property type="project" value="UniProtKB-UniRule"/>
</dbReference>
<dbReference type="GO" id="GO:0006412">
    <property type="term" value="P:translation"/>
    <property type="evidence" value="ECO:0007669"/>
    <property type="project" value="UniProtKB-UniRule"/>
</dbReference>
<dbReference type="FunFam" id="4.10.830.10:FF:000001">
    <property type="entry name" value="30S ribosomal protein S14 type Z"/>
    <property type="match status" value="1"/>
</dbReference>
<dbReference type="Gene3D" id="4.10.830.10">
    <property type="entry name" value="30s Ribosomal Protein S14, Chain N"/>
    <property type="match status" value="1"/>
</dbReference>
<dbReference type="HAMAP" id="MF_01364_B">
    <property type="entry name" value="Ribosomal_uS14_2_B"/>
    <property type="match status" value="1"/>
</dbReference>
<dbReference type="InterPro" id="IPR001209">
    <property type="entry name" value="Ribosomal_uS14"/>
</dbReference>
<dbReference type="InterPro" id="IPR023053">
    <property type="entry name" value="Ribosomal_uS14_bact"/>
</dbReference>
<dbReference type="InterPro" id="IPR018271">
    <property type="entry name" value="Ribosomal_uS14_CS"/>
</dbReference>
<dbReference type="InterPro" id="IPR043140">
    <property type="entry name" value="Ribosomal_uS14_sf"/>
</dbReference>
<dbReference type="NCBIfam" id="NF005974">
    <property type="entry name" value="PRK08061.1"/>
    <property type="match status" value="1"/>
</dbReference>
<dbReference type="PANTHER" id="PTHR19836">
    <property type="entry name" value="30S RIBOSOMAL PROTEIN S14"/>
    <property type="match status" value="1"/>
</dbReference>
<dbReference type="PANTHER" id="PTHR19836:SF26">
    <property type="entry name" value="SMALL RIBOSOMAL SUBUNIT PROTEIN US14B"/>
    <property type="match status" value="1"/>
</dbReference>
<dbReference type="Pfam" id="PF00253">
    <property type="entry name" value="Ribosomal_S14"/>
    <property type="match status" value="1"/>
</dbReference>
<dbReference type="SUPFAM" id="SSF57716">
    <property type="entry name" value="Glucocorticoid receptor-like (DNA-binding domain)"/>
    <property type="match status" value="1"/>
</dbReference>
<dbReference type="PROSITE" id="PS00527">
    <property type="entry name" value="RIBOSOMAL_S14"/>
    <property type="match status" value="1"/>
</dbReference>
<accession>Q1WSA3</accession>
<feature type="chain" id="PRO_0000269109" description="Small ribosomal subunit protein uS14B">
    <location>
        <begin position="1"/>
        <end position="61"/>
    </location>
</feature>
<feature type="binding site" evidence="1">
    <location>
        <position position="24"/>
    </location>
    <ligand>
        <name>Zn(2+)</name>
        <dbReference type="ChEBI" id="CHEBI:29105"/>
    </ligand>
</feature>
<feature type="binding site" evidence="1">
    <location>
        <position position="27"/>
    </location>
    <ligand>
        <name>Zn(2+)</name>
        <dbReference type="ChEBI" id="CHEBI:29105"/>
    </ligand>
</feature>
<feature type="binding site" evidence="1">
    <location>
        <position position="40"/>
    </location>
    <ligand>
        <name>Zn(2+)</name>
        <dbReference type="ChEBI" id="CHEBI:29105"/>
    </ligand>
</feature>
<feature type="binding site" evidence="1">
    <location>
        <position position="43"/>
    </location>
    <ligand>
        <name>Zn(2+)</name>
        <dbReference type="ChEBI" id="CHEBI:29105"/>
    </ligand>
</feature>
<name>RS14Z_LIGS1</name>
<proteinExistence type="inferred from homology"/>
<gene>
    <name evidence="1" type="primary">rpsZ</name>
    <name evidence="1" type="synonym">rpsN</name>
    <name type="ordered locus">LSL_1422</name>
</gene>
<sequence>MAKKSQIAKNKRPAKFSTQEYTRCERCGRPHSVYRKFKLCRVCLRDLAHKGQIPGMKKASW</sequence>